<proteinExistence type="inferred from homology"/>
<organism>
    <name type="scientific">Pectobacterium carotovorum subsp. carotovorum (strain PC1)</name>
    <dbReference type="NCBI Taxonomy" id="561230"/>
    <lineage>
        <taxon>Bacteria</taxon>
        <taxon>Pseudomonadati</taxon>
        <taxon>Pseudomonadota</taxon>
        <taxon>Gammaproteobacteria</taxon>
        <taxon>Enterobacterales</taxon>
        <taxon>Pectobacteriaceae</taxon>
        <taxon>Pectobacterium</taxon>
    </lineage>
</organism>
<protein>
    <recommendedName>
        <fullName evidence="1">Outer membrane protein assembly factor BamA</fullName>
    </recommendedName>
</protein>
<reference key="1">
    <citation type="submission" date="2009-07" db="EMBL/GenBank/DDBJ databases">
        <title>Complete sequence of Pectobacterium carotovorum subsp. carotovorum PC1.</title>
        <authorList>
            <consortium name="US DOE Joint Genome Institute"/>
            <person name="Lucas S."/>
            <person name="Copeland A."/>
            <person name="Lapidus A."/>
            <person name="Glavina del Rio T."/>
            <person name="Tice H."/>
            <person name="Bruce D."/>
            <person name="Goodwin L."/>
            <person name="Pitluck S."/>
            <person name="Munk A.C."/>
            <person name="Brettin T."/>
            <person name="Detter J.C."/>
            <person name="Han C."/>
            <person name="Tapia R."/>
            <person name="Larimer F."/>
            <person name="Land M."/>
            <person name="Hauser L."/>
            <person name="Kyrpides N."/>
            <person name="Mikhailova N."/>
            <person name="Balakrishnan V."/>
            <person name="Glasner J."/>
            <person name="Perna N.T."/>
        </authorList>
    </citation>
    <scope>NUCLEOTIDE SEQUENCE [LARGE SCALE GENOMIC DNA]</scope>
    <source>
        <strain>PC1</strain>
    </source>
</reference>
<gene>
    <name evidence="1" type="primary">bamA</name>
    <name type="synonym">yaeT</name>
    <name type="ordered locus">PC1_0949</name>
</gene>
<sequence>MAIKKLLIASLLFSSATVYGADGFVVKDIHFEGLQRVAVGAALLSMPVRVGDTIGDDDIGNTIRALFATGNFEDVRVLRDGGTLIVQVKERPTIASVTFSGNKSVKDDMLKENLEASGVRVGEALDRTALTSIEKGLEDFYYSVGKYSASVKAVVTPLPRNRVDLKLVFTEGVSAKIQQINIVGNKAFSSDELISRFQLRDEVPWWNVVGDRKYQKQKLSGDLETLRSFYLDRGYARFNIDSTQVSLTPDKKGIYITINMTEGEQYKLSGVTVKGNLAGHSAEIEGLTKIEPGELYNGTKVTRMEEDIKKLLGRYGYAYPRVVTQPEINDADKTVRLNINVDAGNRFYVRHIRFDGNDTSKDAVLRREMRQMEGAWLGNDLVEQGKERLNRLGFFESVDVETQRVPGVADQVDVTYKVKERNTGTFNFGVGFGTESGVSFQAGVQQDNWLGTGNSVGISGTKNDYQTYVELSLTDPYFTVDGVSLGGRIFYNKFEASDADLSDYTNVSYGVGSTLGFPINENNSLRVGLDYVHNDLSDMRPQVAMWRYLDSVGVNPAVVQEGNKSSADFKANDFFLNTGWSYNNLDRGYFPTKGTRASANAKIAVPGSDNEYYKLTFDSASYYPLTDSGKWVVMGRTRAGFADGLGGKEVPFYDNFYAGGSSTVRGFQSNTIGPKAAYYKCAVGATSYSNCPIDSTNLDDAVGGNAMAVLSAELIVPTPFISDKYASSVRTSFFVDGGTVWDTNWENTPATIAAGVPDYSKASNFRVSSGIALQWMSPLGPLVFSYAQPVKKYDGDKSEQFQFNIGKTW</sequence>
<keyword id="KW-0998">Cell outer membrane</keyword>
<keyword id="KW-0472">Membrane</keyword>
<keyword id="KW-0677">Repeat</keyword>
<keyword id="KW-0732">Signal</keyword>
<keyword id="KW-0812">Transmembrane</keyword>
<keyword id="KW-1134">Transmembrane beta strand</keyword>
<evidence type="ECO:0000255" key="1">
    <source>
        <dbReference type="HAMAP-Rule" id="MF_01430"/>
    </source>
</evidence>
<evidence type="ECO:0000255" key="2">
    <source>
        <dbReference type="PROSITE-ProRule" id="PRU01115"/>
    </source>
</evidence>
<comment type="function">
    <text evidence="1">Part of the outer membrane protein assembly complex, which is involved in assembly and insertion of beta-barrel proteins into the outer membrane. Constitutes, with BamD, the core component of the assembly machinery.</text>
</comment>
<comment type="subunit">
    <text evidence="1">Part of the Bam complex, which is composed of the outer membrane protein BamA, and four lipoproteins BamB, BamC, BamD and BamE.</text>
</comment>
<comment type="subcellular location">
    <subcellularLocation>
        <location evidence="1">Cell outer membrane</location>
    </subcellularLocation>
</comment>
<comment type="similarity">
    <text evidence="1">Belongs to the BamA family.</text>
</comment>
<accession>C6DAJ1</accession>
<name>BAMA_PECCP</name>
<feature type="signal peptide" evidence="1">
    <location>
        <begin position="1"/>
        <end position="20"/>
    </location>
</feature>
<feature type="chain" id="PRO_5000485791" description="Outer membrane protein assembly factor BamA">
    <location>
        <begin position="21"/>
        <end position="809"/>
    </location>
</feature>
<feature type="domain" description="POTRA 1" evidence="2">
    <location>
        <begin position="24"/>
        <end position="91"/>
    </location>
</feature>
<feature type="domain" description="POTRA 2" evidence="2">
    <location>
        <begin position="92"/>
        <end position="172"/>
    </location>
</feature>
<feature type="domain" description="POTRA 3" evidence="2">
    <location>
        <begin position="175"/>
        <end position="263"/>
    </location>
</feature>
<feature type="domain" description="POTRA 4" evidence="2">
    <location>
        <begin position="266"/>
        <end position="344"/>
    </location>
</feature>
<feature type="domain" description="POTRA 5" evidence="2">
    <location>
        <begin position="347"/>
        <end position="421"/>
    </location>
</feature>
<dbReference type="EMBL" id="CP001657">
    <property type="protein sequence ID" value="ACT11999.1"/>
    <property type="molecule type" value="Genomic_DNA"/>
</dbReference>
<dbReference type="RefSeq" id="WP_012773637.1">
    <property type="nucleotide sequence ID" value="NC_012917.1"/>
</dbReference>
<dbReference type="SMR" id="C6DAJ1"/>
<dbReference type="STRING" id="561230.PC1_0949"/>
<dbReference type="KEGG" id="pct:PC1_0949"/>
<dbReference type="eggNOG" id="COG4775">
    <property type="taxonomic scope" value="Bacteria"/>
</dbReference>
<dbReference type="HOGENOM" id="CLU_007664_1_0_6"/>
<dbReference type="OrthoDB" id="9803054at2"/>
<dbReference type="Proteomes" id="UP000002736">
    <property type="component" value="Chromosome"/>
</dbReference>
<dbReference type="GO" id="GO:1990063">
    <property type="term" value="C:Bam protein complex"/>
    <property type="evidence" value="ECO:0007669"/>
    <property type="project" value="TreeGrafter"/>
</dbReference>
<dbReference type="GO" id="GO:0043165">
    <property type="term" value="P:Gram-negative-bacterium-type cell outer membrane assembly"/>
    <property type="evidence" value="ECO:0007669"/>
    <property type="project" value="UniProtKB-UniRule"/>
</dbReference>
<dbReference type="GO" id="GO:0051205">
    <property type="term" value="P:protein insertion into membrane"/>
    <property type="evidence" value="ECO:0007669"/>
    <property type="project" value="UniProtKB-UniRule"/>
</dbReference>
<dbReference type="FunFam" id="2.40.160.50:FF:000001">
    <property type="entry name" value="Outer membrane protein assembly factor BamA"/>
    <property type="match status" value="1"/>
</dbReference>
<dbReference type="FunFam" id="3.10.20.310:FF:000001">
    <property type="entry name" value="Outer membrane protein assembly factor BamA"/>
    <property type="match status" value="1"/>
</dbReference>
<dbReference type="FunFam" id="3.10.20.310:FF:000002">
    <property type="entry name" value="Outer membrane protein assembly factor BamA"/>
    <property type="match status" value="1"/>
</dbReference>
<dbReference type="FunFam" id="3.10.20.310:FF:000003">
    <property type="entry name" value="Outer membrane protein assembly factor BamA"/>
    <property type="match status" value="1"/>
</dbReference>
<dbReference type="FunFam" id="3.10.20.310:FF:000004">
    <property type="entry name" value="Outer membrane protein assembly factor BamA"/>
    <property type="match status" value="1"/>
</dbReference>
<dbReference type="FunFam" id="3.10.20.310:FF:000005">
    <property type="entry name" value="Outer membrane protein assembly factor BamA"/>
    <property type="match status" value="1"/>
</dbReference>
<dbReference type="Gene3D" id="3.10.20.310">
    <property type="entry name" value="membrane protein fhac"/>
    <property type="match status" value="5"/>
</dbReference>
<dbReference type="Gene3D" id="2.40.160.50">
    <property type="entry name" value="membrane protein fhac: a member of the omp85/tpsb transporter family"/>
    <property type="match status" value="1"/>
</dbReference>
<dbReference type="HAMAP" id="MF_01430">
    <property type="entry name" value="OM_assembly_BamA"/>
    <property type="match status" value="1"/>
</dbReference>
<dbReference type="InterPro" id="IPR000184">
    <property type="entry name" value="Bac_surfAg_D15"/>
</dbReference>
<dbReference type="InterPro" id="IPR010827">
    <property type="entry name" value="BamA/TamA_POTRA"/>
</dbReference>
<dbReference type="InterPro" id="IPR039910">
    <property type="entry name" value="D15-like"/>
</dbReference>
<dbReference type="InterPro" id="IPR023707">
    <property type="entry name" value="OM_assembly_BamA"/>
</dbReference>
<dbReference type="InterPro" id="IPR034746">
    <property type="entry name" value="POTRA"/>
</dbReference>
<dbReference type="NCBIfam" id="TIGR03303">
    <property type="entry name" value="OM_YaeT"/>
    <property type="match status" value="1"/>
</dbReference>
<dbReference type="NCBIfam" id="NF008287">
    <property type="entry name" value="PRK11067.1"/>
    <property type="match status" value="1"/>
</dbReference>
<dbReference type="PANTHER" id="PTHR12815:SF23">
    <property type="entry name" value="OUTER MEMBRANE PROTEIN ASSEMBLY FACTOR BAMA"/>
    <property type="match status" value="1"/>
</dbReference>
<dbReference type="PANTHER" id="PTHR12815">
    <property type="entry name" value="SORTING AND ASSEMBLY MACHINERY SAMM50 PROTEIN FAMILY MEMBER"/>
    <property type="match status" value="1"/>
</dbReference>
<dbReference type="Pfam" id="PF01103">
    <property type="entry name" value="Omp85"/>
    <property type="match status" value="1"/>
</dbReference>
<dbReference type="Pfam" id="PF07244">
    <property type="entry name" value="POTRA"/>
    <property type="match status" value="4"/>
</dbReference>
<dbReference type="PIRSF" id="PIRSF006076">
    <property type="entry name" value="OM_assembly_OMP85"/>
    <property type="match status" value="1"/>
</dbReference>
<dbReference type="PROSITE" id="PS51779">
    <property type="entry name" value="POTRA"/>
    <property type="match status" value="5"/>
</dbReference>